<protein>
    <recommendedName>
        <fullName evidence="4">Transmembrane protein 132 homolog</fullName>
        <shortName evidence="4">tmem-132</shortName>
    </recommendedName>
    <alternativeName>
        <fullName>Transmembrane protein family 132 middle domain-containing protein</fullName>
    </alternativeName>
</protein>
<feature type="signal peptide" evidence="1">
    <location>
        <begin position="1"/>
        <end position="18"/>
    </location>
</feature>
<feature type="chain" id="PRO_5004324334" description="Transmembrane protein 132 homolog" evidence="1">
    <location>
        <begin position="19"/>
        <end position="927"/>
    </location>
</feature>
<feature type="transmembrane region" description="Helical" evidence="1">
    <location>
        <begin position="749"/>
        <end position="769"/>
    </location>
</feature>
<feature type="region of interest" description="Disordered" evidence="2">
    <location>
        <begin position="789"/>
        <end position="842"/>
    </location>
</feature>
<feature type="compositionally biased region" description="Polar residues" evidence="2">
    <location>
        <begin position="817"/>
        <end position="842"/>
    </location>
</feature>
<feature type="mutagenesis site" description="Abolishes the interaction with gex-3. Abnormal neuronal morphology of the PDE neurons." evidence="3">
    <original>P</original>
    <variation>T</variation>
    <variation>A</variation>
    <location>
        <position position="784"/>
    </location>
</feature>
<sequence>MLKKLWICISCIVTTALSDHITFSPPDEAFVLFHSHQNTNFTSVFVQDGCPNSRNLMATVYSADLSSSRRVFEEIPLHCAVRVRIITEKVVVTRPYVDLLAVVDESLSRHVGAICVHAQLTSSTSAIELGKCYLNRHEDQKSSCVIRIPVPFSWFPVDQNRTSVLSVSYTVSEKCDQNFHDLPQHLIEVNSRIAKQKIDWLANATETSVTLLSTASQAFSQNSMQTLFLHVKSWANETQPMEIRLWVDSRMSIETVYPTSSNWTIRVSSASRPFFYTSLVCTPKERMTGFNDNIVAILIKMVSSTDAIKDDVILHWHVILGPKSSEPPPDDHKVATKFSVIADEVAAVVIVPKRKELMNLAVISGIQVTSSLRIFTISIGAKAEDVTTQSHCISSDANIIKVSPTCSSVYLDGSESNGSSDAQVYAHYLRYTTTYSFRVWFPKLPLKIWMSSSTLSTIKNWKVGFWRDLPLGGGVKRSRAARQFACVNRFQHSHVKVLASLWIEDIKTGDQLYLSSHKSILFDVTNIVHNTLQISNRTVANVKFYEGRAKVIGENVGLAKLIVRNAKKSMDLVSENISVQNKEVSTTGLSARPICDTSFRILPILFSPAFFKVEIAHSKSLTKLYQQCSIFASVSYSDATWEPLNDLDSSYFEMSAHSDNERALAVSHHASKVHVIAIDENWPLPVVEISLQSSAQCASTINGASPAALAVTVLNVPIKINNSFPSATDLDSSFSTTIAPSDSLPSIPFHIFVLTIIGLIILFLFISFVRRSAAFKGYEQLVVPFFSRLSSSSGSNSRQEETNEWVWLSQPQPPSSTISSGYSGNKSTAERQSSNGDDPSRTSISYHGSEISVFIAPSQGNVVVNQSSRHPRYTLVDSNSDHNLARIVPKEDRWTTGGHEQFHTWTWKQRGGGGGRMMEAPIRESIA</sequence>
<comment type="function">
    <text evidence="3">Regulates neuronal morphology via inhibition of the WAVE regulatory complex (WCR), a complex that controls F-actin cytoskeletal dynamics.</text>
</comment>
<comment type="subunit">
    <text evidence="3">Interacts with gex-3.</text>
</comment>
<comment type="subcellular location">
    <subcellularLocation>
        <location evidence="5">Membrane</location>
        <topology evidence="5">Single-pass type I membrane protein</topology>
    </subcellularLocation>
</comment>
<comment type="tissue specificity">
    <text evidence="3">Specifically expressed in neurons.</text>
</comment>
<comment type="disruption phenotype">
    <text evidence="3">Mutants exhibit striking morphological defects in the dopaminergic PDE neurons.</text>
</comment>
<comment type="similarity">
    <text evidence="5">Belongs to the TMEM132 family.</text>
</comment>
<organism>
    <name type="scientific">Caenorhabditis elegans</name>
    <dbReference type="NCBI Taxonomy" id="6239"/>
    <lineage>
        <taxon>Eukaryota</taxon>
        <taxon>Metazoa</taxon>
        <taxon>Ecdysozoa</taxon>
        <taxon>Nematoda</taxon>
        <taxon>Chromadorea</taxon>
        <taxon>Rhabditida</taxon>
        <taxon>Rhabditina</taxon>
        <taxon>Rhabditomorpha</taxon>
        <taxon>Rhabditoidea</taxon>
        <taxon>Rhabditidae</taxon>
        <taxon>Peloderinae</taxon>
        <taxon>Caenorhabditis</taxon>
    </lineage>
</organism>
<name>T132_CAEEL</name>
<dbReference type="EMBL" id="BX284603">
    <property type="protein sequence ID" value="CCD73884.1"/>
    <property type="molecule type" value="Genomic_DNA"/>
</dbReference>
<dbReference type="STRING" id="6239.Y71H2AM.10"/>
<dbReference type="PaxDb" id="6239-Y71H2AM.10"/>
<dbReference type="PeptideAtlas" id="Q9BL47"/>
<dbReference type="EnsemblMetazoa" id="Y71H2AM.10.1">
    <property type="protein sequence ID" value="Y71H2AM.10.1"/>
    <property type="gene ID" value="WBGene00022175"/>
</dbReference>
<dbReference type="KEGG" id="cel:CELE_Y71H2AM.10"/>
<dbReference type="UCSC" id="Y71H2AM.10">
    <property type="organism name" value="c. elegans"/>
</dbReference>
<dbReference type="AGR" id="WB:WBGene00022175"/>
<dbReference type="CTD" id="175386"/>
<dbReference type="WormBase" id="Y71H2AM.10">
    <property type="protein sequence ID" value="CE46339"/>
    <property type="gene ID" value="WBGene00022175"/>
    <property type="gene designation" value="tmem-132"/>
</dbReference>
<dbReference type="eggNOG" id="KOG4789">
    <property type="taxonomic scope" value="Eukaryota"/>
</dbReference>
<dbReference type="GeneTree" id="ENSGT00940000173689"/>
<dbReference type="HOGENOM" id="CLU_304083_0_0_1"/>
<dbReference type="InParanoid" id="Q9BL47"/>
<dbReference type="OMA" id="DWQIAVW"/>
<dbReference type="OrthoDB" id="10026202at2759"/>
<dbReference type="Reactome" id="R-CEL-381426">
    <property type="pathway name" value="Regulation of Insulin-like Growth Factor (IGF) transport and uptake by Insulin-like Growth Factor Binding Proteins (IGFBPs)"/>
</dbReference>
<dbReference type="Reactome" id="R-CEL-8957275">
    <property type="pathway name" value="Post-translational protein phosphorylation"/>
</dbReference>
<dbReference type="Proteomes" id="UP000001940">
    <property type="component" value="Chromosome III"/>
</dbReference>
<dbReference type="Bgee" id="WBGene00022175">
    <property type="expression patterns" value="Expressed in larva and 4 other cell types or tissues"/>
</dbReference>
<dbReference type="GO" id="GO:0016020">
    <property type="term" value="C:membrane"/>
    <property type="evidence" value="ECO:0007669"/>
    <property type="project" value="UniProtKB-SubCell"/>
</dbReference>
<dbReference type="GO" id="GO:0071542">
    <property type="term" value="P:dopaminergic neuron differentiation"/>
    <property type="evidence" value="ECO:0000315"/>
    <property type="project" value="UniProtKB"/>
</dbReference>
<dbReference type="InterPro" id="IPR055423">
    <property type="entry name" value="Ig_TMEM132_5th"/>
</dbReference>
<dbReference type="InterPro" id="IPR055424">
    <property type="entry name" value="Ig_TMEM132_6th"/>
</dbReference>
<dbReference type="InterPro" id="IPR026307">
    <property type="entry name" value="TMEM132"/>
</dbReference>
<dbReference type="InterPro" id="IPR031437">
    <property type="entry name" value="TMEM132_M"/>
</dbReference>
<dbReference type="PANTHER" id="PTHR13388">
    <property type="entry name" value="DETONATOR, ISOFORM E"/>
    <property type="match status" value="1"/>
</dbReference>
<dbReference type="PANTHER" id="PTHR13388:SF11">
    <property type="entry name" value="DETONATOR, ISOFORM E"/>
    <property type="match status" value="1"/>
</dbReference>
<dbReference type="Pfam" id="PF16070">
    <property type="entry name" value="Ig_TMEM132_4th"/>
    <property type="match status" value="1"/>
</dbReference>
<dbReference type="Pfam" id="PF23486">
    <property type="entry name" value="Ig_TMEM132_5th"/>
    <property type="match status" value="1"/>
</dbReference>
<dbReference type="Pfam" id="PF23487">
    <property type="entry name" value="Ig_TMEM132_6th"/>
    <property type="match status" value="1"/>
</dbReference>
<gene>
    <name evidence="6" type="primary">tmem-132</name>
    <name evidence="6" type="ORF">Y71H2AM.10</name>
</gene>
<accession>Q9BL47</accession>
<reference key="1">
    <citation type="journal article" date="1998" name="Science">
        <title>Genome sequence of the nematode C. elegans: a platform for investigating biology.</title>
        <authorList>
            <consortium name="The C. elegans sequencing consortium"/>
        </authorList>
    </citation>
    <scope>NUCLEOTIDE SEQUENCE [LARGE SCALE GENOMIC DNA]</scope>
    <source>
        <strain>Bristol N2</strain>
    </source>
</reference>
<reference key="2">
    <citation type="journal article" date="2021" name="Mol. Brain">
        <title>The C. elegans homolog of human panic-disorder risk gene TMEM132D orchestrates neuronal morphogenesis through the WAVE-regulatory complex.</title>
        <authorList>
            <person name="Wang X."/>
            <person name="Jiang W."/>
            <person name="Luo S."/>
            <person name="Yang X."/>
            <person name="Wang C."/>
            <person name="Wang B."/>
            <person name="Dang Y."/>
            <person name="Shen Y."/>
            <person name="Ma D.K."/>
        </authorList>
    </citation>
    <scope>FUNCTION</scope>
    <scope>DISRUPTION PHENOTYPE</scope>
    <scope>TISSUE SPECIFICITY</scope>
    <scope>MUTAGENESIS OF PRO-784</scope>
    <scope>INTERACTION WITH GEX-3</scope>
</reference>
<keyword id="KW-0472">Membrane</keyword>
<keyword id="KW-1185">Reference proteome</keyword>
<keyword id="KW-0732">Signal</keyword>
<keyword id="KW-0812">Transmembrane</keyword>
<keyword id="KW-1133">Transmembrane helix</keyword>
<proteinExistence type="evidence at protein level"/>
<evidence type="ECO:0000255" key="1"/>
<evidence type="ECO:0000256" key="2">
    <source>
        <dbReference type="SAM" id="MobiDB-lite"/>
    </source>
</evidence>
<evidence type="ECO:0000269" key="3">
    <source>
    </source>
</evidence>
<evidence type="ECO:0000303" key="4">
    <source>
    </source>
</evidence>
<evidence type="ECO:0000305" key="5"/>
<evidence type="ECO:0000312" key="6">
    <source>
        <dbReference type="WormBase" id="Y71H2AM.10"/>
    </source>
</evidence>